<evidence type="ECO:0000255" key="1">
    <source>
        <dbReference type="HAMAP-Rule" id="MF_00072"/>
    </source>
</evidence>
<reference key="1">
    <citation type="journal article" date="2007" name="J. Bacteriol.">
        <title>The genome sequence of avian pathogenic Escherichia coli strain O1:K1:H7 shares strong similarities with human extraintestinal pathogenic E. coli genomes.</title>
        <authorList>
            <person name="Johnson T.J."/>
            <person name="Kariyawasam S."/>
            <person name="Wannemuehler Y."/>
            <person name="Mangiamele P."/>
            <person name="Johnson S.J."/>
            <person name="Doetkott C."/>
            <person name="Skyberg J.A."/>
            <person name="Lynne A.M."/>
            <person name="Johnson J.R."/>
            <person name="Nolan L.K."/>
        </authorList>
    </citation>
    <scope>NUCLEOTIDE SEQUENCE [LARGE SCALE GENOMIC DNA]</scope>
</reference>
<name>RF3_ECOK1</name>
<feature type="chain" id="PRO_1000193526" description="Peptide chain release factor 3">
    <location>
        <begin position="1"/>
        <end position="528"/>
    </location>
</feature>
<feature type="domain" description="tr-type G">
    <location>
        <begin position="10"/>
        <end position="279"/>
    </location>
</feature>
<feature type="binding site" evidence="1">
    <location>
        <begin position="19"/>
        <end position="26"/>
    </location>
    <ligand>
        <name>GTP</name>
        <dbReference type="ChEBI" id="CHEBI:37565"/>
    </ligand>
</feature>
<feature type="binding site" evidence="1">
    <location>
        <begin position="87"/>
        <end position="91"/>
    </location>
    <ligand>
        <name>GTP</name>
        <dbReference type="ChEBI" id="CHEBI:37565"/>
    </ligand>
</feature>
<feature type="binding site" evidence="1">
    <location>
        <begin position="141"/>
        <end position="144"/>
    </location>
    <ligand>
        <name>GTP</name>
        <dbReference type="ChEBI" id="CHEBI:37565"/>
    </ligand>
</feature>
<accession>A1AJU2</accession>
<sequence length="528" mass="59328">MTSLLAAEVAKRRTFAIISHPDAGKTTITEKVLLFGQAIQTAGTVKGRGSNQHAKSDWMEMEKQRGISITTSVMQFPYHDCLVNLLDTPGHEDFSEDTYRTLTAVDCCLMVIDAAKGVEDRTRKLMEVTRLRDTPILTFMNKLDRDIRDPMELLDEVENELKIGCAPITWPIGCGKLFKGVYHLYKDETYLYQSGKGHTIQEVRIVKGLNNPDLDAAVGEDLAQQLRDELELVKGASNEFDKELFLAGEITPVFFGTALGNFGVDHMLDGLVEWAPAPMPRQTDTRTVEASEDKFTGFVFKIQANMDPKHRDRVAFMRVVSGKYEKGMKLRQVRTAKDVVISDALTFMAGDRSHVEEAYPGDILGLHNHGTIQIGDTFTQGEMMKFTGIPNFAPELFRRIRLKDPLKQKQLLKGLVQLSEEGAVQVFRPISNNDLIVGAVGVLQFDVVVARLKSEYNVEAVYESVNVATARWVECADAKKFEEFKRKNESQLALDGGDNLAYIATSMVNLRLAQERYPDVQFHQTREH</sequence>
<organism>
    <name type="scientific">Escherichia coli O1:K1 / APEC</name>
    <dbReference type="NCBI Taxonomy" id="405955"/>
    <lineage>
        <taxon>Bacteria</taxon>
        <taxon>Pseudomonadati</taxon>
        <taxon>Pseudomonadota</taxon>
        <taxon>Gammaproteobacteria</taxon>
        <taxon>Enterobacterales</taxon>
        <taxon>Enterobacteriaceae</taxon>
        <taxon>Escherichia</taxon>
    </lineage>
</organism>
<comment type="function">
    <text evidence="1">Increases the formation of ribosomal termination complexes and stimulates activities of RF-1 and RF-2. It binds guanine nucleotides and has strong preference for UGA stop codons. It may interact directly with the ribosome. The stimulation of RF-1 and RF-2 is significantly reduced by GTP and GDP, but not by GMP.</text>
</comment>
<comment type="subcellular location">
    <subcellularLocation>
        <location evidence="1">Cytoplasm</location>
    </subcellularLocation>
</comment>
<comment type="similarity">
    <text evidence="1">Belongs to the TRAFAC class translation factor GTPase superfamily. Classic translation factor GTPase family. PrfC subfamily.</text>
</comment>
<proteinExistence type="inferred from homology"/>
<protein>
    <recommendedName>
        <fullName evidence="1">Peptide chain release factor 3</fullName>
        <shortName evidence="1">RF-3</shortName>
    </recommendedName>
</protein>
<dbReference type="EMBL" id="CP000468">
    <property type="protein sequence ID" value="ABJ03932.1"/>
    <property type="molecule type" value="Genomic_DNA"/>
</dbReference>
<dbReference type="RefSeq" id="WP_000202563.1">
    <property type="nucleotide sequence ID" value="NZ_CADILS010000013.1"/>
</dbReference>
<dbReference type="SMR" id="A1AJU2"/>
<dbReference type="GeneID" id="75058942"/>
<dbReference type="KEGG" id="ecv:APECO1_2006"/>
<dbReference type="HOGENOM" id="CLU_002794_2_1_6"/>
<dbReference type="Proteomes" id="UP000008216">
    <property type="component" value="Chromosome"/>
</dbReference>
<dbReference type="GO" id="GO:0005829">
    <property type="term" value="C:cytosol"/>
    <property type="evidence" value="ECO:0007669"/>
    <property type="project" value="TreeGrafter"/>
</dbReference>
<dbReference type="GO" id="GO:0005525">
    <property type="term" value="F:GTP binding"/>
    <property type="evidence" value="ECO:0007669"/>
    <property type="project" value="UniProtKB-UniRule"/>
</dbReference>
<dbReference type="GO" id="GO:0003924">
    <property type="term" value="F:GTPase activity"/>
    <property type="evidence" value="ECO:0007669"/>
    <property type="project" value="InterPro"/>
</dbReference>
<dbReference type="GO" id="GO:0097216">
    <property type="term" value="F:guanosine tetraphosphate binding"/>
    <property type="evidence" value="ECO:0007669"/>
    <property type="project" value="UniProtKB-ARBA"/>
</dbReference>
<dbReference type="GO" id="GO:0016150">
    <property type="term" value="F:translation release factor activity, codon nonspecific"/>
    <property type="evidence" value="ECO:0007669"/>
    <property type="project" value="TreeGrafter"/>
</dbReference>
<dbReference type="GO" id="GO:0016149">
    <property type="term" value="F:translation release factor activity, codon specific"/>
    <property type="evidence" value="ECO:0007669"/>
    <property type="project" value="UniProtKB-UniRule"/>
</dbReference>
<dbReference type="GO" id="GO:0006449">
    <property type="term" value="P:regulation of translational termination"/>
    <property type="evidence" value="ECO:0007669"/>
    <property type="project" value="UniProtKB-UniRule"/>
</dbReference>
<dbReference type="CDD" id="cd04169">
    <property type="entry name" value="RF3"/>
    <property type="match status" value="1"/>
</dbReference>
<dbReference type="CDD" id="cd03689">
    <property type="entry name" value="RF3_II"/>
    <property type="match status" value="1"/>
</dbReference>
<dbReference type="CDD" id="cd16259">
    <property type="entry name" value="RF3_III"/>
    <property type="match status" value="1"/>
</dbReference>
<dbReference type="FunFam" id="2.40.30.10:FF:000040">
    <property type="entry name" value="Peptide chain release factor 3"/>
    <property type="match status" value="1"/>
</dbReference>
<dbReference type="FunFam" id="3.30.70.3280:FF:000001">
    <property type="entry name" value="Peptide chain release factor 3"/>
    <property type="match status" value="1"/>
</dbReference>
<dbReference type="FunFam" id="3.40.50.300:FF:000184">
    <property type="entry name" value="Peptide chain release factor 3"/>
    <property type="match status" value="1"/>
</dbReference>
<dbReference type="FunFam" id="3.40.50.300:FF:000253">
    <property type="entry name" value="Peptide chain release factor 3"/>
    <property type="match status" value="1"/>
</dbReference>
<dbReference type="Gene3D" id="3.40.50.300">
    <property type="entry name" value="P-loop containing nucleotide triphosphate hydrolases"/>
    <property type="match status" value="3"/>
</dbReference>
<dbReference type="Gene3D" id="3.30.70.3280">
    <property type="entry name" value="Peptide chain release factor 3, domain III"/>
    <property type="match status" value="1"/>
</dbReference>
<dbReference type="HAMAP" id="MF_00072">
    <property type="entry name" value="Rel_fac_3"/>
    <property type="match status" value="1"/>
</dbReference>
<dbReference type="InterPro" id="IPR053905">
    <property type="entry name" value="EF-G-like_DII"/>
</dbReference>
<dbReference type="InterPro" id="IPR035647">
    <property type="entry name" value="EFG_III/V"/>
</dbReference>
<dbReference type="InterPro" id="IPR031157">
    <property type="entry name" value="G_TR_CS"/>
</dbReference>
<dbReference type="InterPro" id="IPR027417">
    <property type="entry name" value="P-loop_NTPase"/>
</dbReference>
<dbReference type="InterPro" id="IPR004548">
    <property type="entry name" value="PrfC"/>
</dbReference>
<dbReference type="InterPro" id="IPR032090">
    <property type="entry name" value="RF3_C"/>
</dbReference>
<dbReference type="InterPro" id="IPR038467">
    <property type="entry name" value="RF3_dom_3_sf"/>
</dbReference>
<dbReference type="InterPro" id="IPR041732">
    <property type="entry name" value="RF3_GTP-bd"/>
</dbReference>
<dbReference type="InterPro" id="IPR005225">
    <property type="entry name" value="Small_GTP-bd"/>
</dbReference>
<dbReference type="InterPro" id="IPR000795">
    <property type="entry name" value="T_Tr_GTP-bd_dom"/>
</dbReference>
<dbReference type="InterPro" id="IPR009000">
    <property type="entry name" value="Transl_B-barrel_sf"/>
</dbReference>
<dbReference type="NCBIfam" id="TIGR00503">
    <property type="entry name" value="prfC"/>
    <property type="match status" value="1"/>
</dbReference>
<dbReference type="NCBIfam" id="NF001964">
    <property type="entry name" value="PRK00741.1"/>
    <property type="match status" value="1"/>
</dbReference>
<dbReference type="NCBIfam" id="TIGR00231">
    <property type="entry name" value="small_GTP"/>
    <property type="match status" value="1"/>
</dbReference>
<dbReference type="PANTHER" id="PTHR43556">
    <property type="entry name" value="PEPTIDE CHAIN RELEASE FACTOR RF3"/>
    <property type="match status" value="1"/>
</dbReference>
<dbReference type="PANTHER" id="PTHR43556:SF2">
    <property type="entry name" value="PEPTIDE CHAIN RELEASE FACTOR RF3"/>
    <property type="match status" value="1"/>
</dbReference>
<dbReference type="Pfam" id="PF22042">
    <property type="entry name" value="EF-G_D2"/>
    <property type="match status" value="1"/>
</dbReference>
<dbReference type="Pfam" id="PF00009">
    <property type="entry name" value="GTP_EFTU"/>
    <property type="match status" value="1"/>
</dbReference>
<dbReference type="Pfam" id="PF16658">
    <property type="entry name" value="RF3_C"/>
    <property type="match status" value="1"/>
</dbReference>
<dbReference type="PRINTS" id="PR00315">
    <property type="entry name" value="ELONGATNFCT"/>
</dbReference>
<dbReference type="SUPFAM" id="SSF54980">
    <property type="entry name" value="EF-G C-terminal domain-like"/>
    <property type="match status" value="1"/>
</dbReference>
<dbReference type="SUPFAM" id="SSF52540">
    <property type="entry name" value="P-loop containing nucleoside triphosphate hydrolases"/>
    <property type="match status" value="1"/>
</dbReference>
<dbReference type="SUPFAM" id="SSF50447">
    <property type="entry name" value="Translation proteins"/>
    <property type="match status" value="1"/>
</dbReference>
<dbReference type="PROSITE" id="PS00301">
    <property type="entry name" value="G_TR_1"/>
    <property type="match status" value="1"/>
</dbReference>
<dbReference type="PROSITE" id="PS51722">
    <property type="entry name" value="G_TR_2"/>
    <property type="match status" value="1"/>
</dbReference>
<keyword id="KW-0963">Cytoplasm</keyword>
<keyword id="KW-0342">GTP-binding</keyword>
<keyword id="KW-0547">Nucleotide-binding</keyword>
<keyword id="KW-0648">Protein biosynthesis</keyword>
<keyword id="KW-1185">Reference proteome</keyword>
<gene>
    <name evidence="1" type="primary">prfC</name>
    <name type="ordered locus">Ecok1_44380</name>
    <name type="ORF">APECO1_2006</name>
</gene>